<proteinExistence type="evidence at transcript level"/>
<evidence type="ECO:0000250" key="1"/>
<evidence type="ECO:0000250" key="2">
    <source>
        <dbReference type="UniProtKB" id="Q5T8A7"/>
    </source>
</evidence>
<evidence type="ECO:0000256" key="3">
    <source>
        <dbReference type="SAM" id="MobiDB-lite"/>
    </source>
</evidence>
<evidence type="ECO:0000269" key="4">
    <source>
    </source>
</evidence>
<evidence type="ECO:0000305" key="5"/>
<reference key="1">
    <citation type="journal article" date="2004" name="DNA Res.">
        <title>Prediction of the coding sequences of mouse homologues of KIAA gene: IV. The complete nucleotide sequences of 500 mouse KIAA-homologous cDNAs identified by screening of terminal sequences of cDNA clones randomly sampled from size-fractionated libraries.</title>
        <authorList>
            <person name="Okazaki N."/>
            <person name="Kikuno R."/>
            <person name="Ohara R."/>
            <person name="Inamoto S."/>
            <person name="Koseki H."/>
            <person name="Hiraoka S."/>
            <person name="Saga Y."/>
            <person name="Seino S."/>
            <person name="Nishimura M."/>
            <person name="Kaisho T."/>
            <person name="Hoshino K."/>
            <person name="Kitamura H."/>
            <person name="Nagase T."/>
            <person name="Ohara O."/>
            <person name="Koga H."/>
        </authorList>
    </citation>
    <scope>NUCLEOTIDE SEQUENCE [LARGE SCALE MRNA]</scope>
    <source>
        <tissue>Fetal brain</tissue>
    </source>
</reference>
<reference key="2">
    <citation type="journal article" date="2009" name="PLoS Biol.">
        <title>Lineage-specific biology revealed by a finished genome assembly of the mouse.</title>
        <authorList>
            <person name="Church D.M."/>
            <person name="Goodstadt L."/>
            <person name="Hillier L.W."/>
            <person name="Zody M.C."/>
            <person name="Goldstein S."/>
            <person name="She X."/>
            <person name="Bult C.J."/>
            <person name="Agarwala R."/>
            <person name="Cherry J.L."/>
            <person name="DiCuccio M."/>
            <person name="Hlavina W."/>
            <person name="Kapustin Y."/>
            <person name="Meric P."/>
            <person name="Maglott D."/>
            <person name="Birtle Z."/>
            <person name="Marques A.C."/>
            <person name="Graves T."/>
            <person name="Zhou S."/>
            <person name="Teague B."/>
            <person name="Potamousis K."/>
            <person name="Churas C."/>
            <person name="Place M."/>
            <person name="Herschleb J."/>
            <person name="Runnheim R."/>
            <person name="Forrest D."/>
            <person name="Amos-Landgraf J."/>
            <person name="Schwartz D.C."/>
            <person name="Cheng Z."/>
            <person name="Lindblad-Toh K."/>
            <person name="Eichler E.E."/>
            <person name="Ponting C.P."/>
        </authorList>
    </citation>
    <scope>NUCLEOTIDE SEQUENCE [LARGE SCALE GENOMIC DNA]</scope>
    <source>
        <strain>C57BL/6J</strain>
    </source>
</reference>
<reference key="3">
    <citation type="journal article" date="2004" name="Genome Res.">
        <title>The status, quality, and expansion of the NIH full-length cDNA project: the Mammalian Gene Collection (MGC).</title>
        <authorList>
            <consortium name="The MGC Project Team"/>
        </authorList>
    </citation>
    <scope>NUCLEOTIDE SEQUENCE [LARGE SCALE MRNA]</scope>
    <source>
        <strain>C57BL/6J</strain>
        <tissue>Brain</tissue>
    </source>
</reference>
<reference key="4">
    <citation type="journal article" date="2005" name="Biochem. Biophys. Res. Commun.">
        <title>KIAA0649, a 1A6/DRIM-interacting protein with the oncogenic potential.</title>
        <authorList>
            <person name="Yang L."/>
            <person name="Zhao J."/>
            <person name="Lu W."/>
            <person name="Li Y."/>
            <person name="Du X."/>
            <person name="Ning T."/>
            <person name="Lu G."/>
            <person name="Ke Y."/>
        </authorList>
    </citation>
    <scope>FUNCTION</scope>
</reference>
<comment type="function">
    <text evidence="4">Inhibits phosphatase activity of protein phosphatase 1 (PP1) complexes. May positively regulate cell proliferation.</text>
</comment>
<comment type="subunit">
    <text evidence="1">Interacts with UTP20 and PPP1CA.</text>
</comment>
<comment type="subcellular location">
    <subcellularLocation>
        <location evidence="1">Nucleus</location>
        <location evidence="1">Nucleolus</location>
    </subcellularLocation>
</comment>
<comment type="miscellaneous">
    <text>Nude mice injected with Ppp1r26-expressing cells develop tumors within 2 weeks.</text>
</comment>
<comment type="sequence caution" evidence="5">
    <conflict type="erroneous initiation">
        <sequence resource="EMBL-CDS" id="BAD32271"/>
    </conflict>
    <text>Extended N-terminus.</text>
</comment>
<dbReference type="EMBL" id="AK172993">
    <property type="protein sequence ID" value="BAD32271.1"/>
    <property type="status" value="ALT_INIT"/>
    <property type="molecule type" value="mRNA"/>
</dbReference>
<dbReference type="EMBL" id="BC070440">
    <property type="protein sequence ID" value="AAH70440.1"/>
    <property type="molecule type" value="mRNA"/>
</dbReference>
<dbReference type="EMBL" id="AL772249">
    <property type="status" value="NOT_ANNOTATED_CDS"/>
    <property type="molecule type" value="Genomic_DNA"/>
</dbReference>
<dbReference type="CCDS" id="CCDS15836.1"/>
<dbReference type="RefSeq" id="NP_001005420.1">
    <property type="nucleotide sequence ID" value="NM_001005420.3"/>
</dbReference>
<dbReference type="RefSeq" id="NP_001355088.1">
    <property type="nucleotide sequence ID" value="NM_001368159.2"/>
</dbReference>
<dbReference type="RefSeq" id="NP_001398123.1">
    <property type="nucleotide sequence ID" value="NM_001411194.1"/>
</dbReference>
<dbReference type="RefSeq" id="NP_001398124.1">
    <property type="nucleotide sequence ID" value="NM_001411195.1"/>
</dbReference>
<dbReference type="RefSeq" id="NP_001398125.1">
    <property type="nucleotide sequence ID" value="NM_001411196.1"/>
</dbReference>
<dbReference type="RefSeq" id="NP_001398126.1">
    <property type="nucleotide sequence ID" value="NM_001411197.1"/>
</dbReference>
<dbReference type="RefSeq" id="NP_001398127.1">
    <property type="nucleotide sequence ID" value="NM_001411198.1"/>
</dbReference>
<dbReference type="RefSeq" id="NP_001398128.1">
    <property type="nucleotide sequence ID" value="NM_001411199.1"/>
</dbReference>
<dbReference type="RefSeq" id="NP_001398129.1">
    <property type="nucleotide sequence ID" value="NM_001411200.1"/>
</dbReference>
<dbReference type="RefSeq" id="NP_001398130.1">
    <property type="nucleotide sequence ID" value="NM_001411201.1"/>
</dbReference>
<dbReference type="RefSeq" id="XP_006498089.1">
    <property type="nucleotide sequence ID" value="XM_006498026.3"/>
</dbReference>
<dbReference type="RefSeq" id="XP_006498090.1">
    <property type="nucleotide sequence ID" value="XM_006498027.2"/>
</dbReference>
<dbReference type="RefSeq" id="XP_006498092.1">
    <property type="nucleotide sequence ID" value="XM_006498029.3"/>
</dbReference>
<dbReference type="RefSeq" id="XP_011237395.1">
    <property type="nucleotide sequence ID" value="XM_011239093.1"/>
</dbReference>
<dbReference type="RefSeq" id="XP_017173526.1">
    <property type="nucleotide sequence ID" value="XM_017318037.1"/>
</dbReference>
<dbReference type="FunCoup" id="Q6A025">
    <property type="interactions" value="565"/>
</dbReference>
<dbReference type="STRING" id="10090.ENSMUSP00000042173"/>
<dbReference type="GlyGen" id="Q6A025">
    <property type="glycosylation" value="1 site"/>
</dbReference>
<dbReference type="iPTMnet" id="Q6A025"/>
<dbReference type="PhosphoSitePlus" id="Q6A025"/>
<dbReference type="PaxDb" id="10090-ENSMUSP00000042173"/>
<dbReference type="ProteomicsDB" id="291725"/>
<dbReference type="Antibodypedia" id="32039">
    <property type="antibodies" value="11 antibodies from 8 providers"/>
</dbReference>
<dbReference type="DNASU" id="241289"/>
<dbReference type="Ensembl" id="ENSMUST00000040324.14">
    <property type="protein sequence ID" value="ENSMUSP00000042173.8"/>
    <property type="gene ID" value="ENSMUSG00000035829.14"/>
</dbReference>
<dbReference type="Ensembl" id="ENSMUST00000189694.2">
    <property type="protein sequence ID" value="ENSMUSP00000139546.2"/>
    <property type="gene ID" value="ENSMUSG00000035829.14"/>
</dbReference>
<dbReference type="GeneID" id="241289"/>
<dbReference type="KEGG" id="mmu:241289"/>
<dbReference type="UCSC" id="uc008iye.1">
    <property type="organism name" value="mouse"/>
</dbReference>
<dbReference type="AGR" id="MGI:2685193"/>
<dbReference type="CTD" id="9858"/>
<dbReference type="MGI" id="MGI:2685193">
    <property type="gene designation" value="Ppp1r26"/>
</dbReference>
<dbReference type="VEuPathDB" id="HostDB:ENSMUSG00000035829"/>
<dbReference type="eggNOG" id="ENOG502QRRS">
    <property type="taxonomic scope" value="Eukaryota"/>
</dbReference>
<dbReference type="GeneTree" id="ENSGT00390000014118"/>
<dbReference type="HOGENOM" id="CLU_007963_1_0_1"/>
<dbReference type="InParanoid" id="Q6A025"/>
<dbReference type="OMA" id="PWPSRKA"/>
<dbReference type="OrthoDB" id="9939953at2759"/>
<dbReference type="PhylomeDB" id="Q6A025"/>
<dbReference type="TreeFam" id="TF331544"/>
<dbReference type="BioGRID-ORCS" id="241289">
    <property type="hits" value="3 hits in 74 CRISPR screens"/>
</dbReference>
<dbReference type="ChiTaRS" id="Ppp1r26">
    <property type="organism name" value="mouse"/>
</dbReference>
<dbReference type="PRO" id="PR:Q6A025"/>
<dbReference type="Proteomes" id="UP000000589">
    <property type="component" value="Chromosome 2"/>
</dbReference>
<dbReference type="RNAct" id="Q6A025">
    <property type="molecule type" value="protein"/>
</dbReference>
<dbReference type="Bgee" id="ENSMUSG00000035829">
    <property type="expression patterns" value="Expressed in otolith organ and 191 other cell types or tissues"/>
</dbReference>
<dbReference type="GO" id="GO:0005730">
    <property type="term" value="C:nucleolus"/>
    <property type="evidence" value="ECO:0007669"/>
    <property type="project" value="UniProtKB-SubCell"/>
</dbReference>
<dbReference type="GO" id="GO:0004864">
    <property type="term" value="F:protein phosphatase inhibitor activity"/>
    <property type="evidence" value="ECO:0007669"/>
    <property type="project" value="UniProtKB-KW"/>
</dbReference>
<dbReference type="InterPro" id="IPR026130">
    <property type="entry name" value="PPP1R26"/>
</dbReference>
<dbReference type="InterPro" id="IPR031474">
    <property type="entry name" value="PPP1R26_N"/>
</dbReference>
<dbReference type="PANTHER" id="PTHR15724">
    <property type="entry name" value="PROTEIN PHOSPHATASE 1 REGULATORY SUBUNIT 26"/>
    <property type="match status" value="1"/>
</dbReference>
<dbReference type="PANTHER" id="PTHR15724:SF0">
    <property type="entry name" value="PROTEIN PHOSPHATASE 1 REGULATORY SUBUNIT 26"/>
    <property type="match status" value="1"/>
</dbReference>
<dbReference type="Pfam" id="PF15740">
    <property type="entry name" value="PPP1R26_N"/>
    <property type="match status" value="1"/>
</dbReference>
<protein>
    <recommendedName>
        <fullName>Protein phosphatase 1 regulatory subunit 26</fullName>
    </recommendedName>
</protein>
<name>PPR26_MOUSE</name>
<organism>
    <name type="scientific">Mus musculus</name>
    <name type="common">Mouse</name>
    <dbReference type="NCBI Taxonomy" id="10090"/>
    <lineage>
        <taxon>Eukaryota</taxon>
        <taxon>Metazoa</taxon>
        <taxon>Chordata</taxon>
        <taxon>Craniata</taxon>
        <taxon>Vertebrata</taxon>
        <taxon>Euteleostomi</taxon>
        <taxon>Mammalia</taxon>
        <taxon>Eutheria</taxon>
        <taxon>Euarchontoglires</taxon>
        <taxon>Glires</taxon>
        <taxon>Rodentia</taxon>
        <taxon>Myomorpha</taxon>
        <taxon>Muroidea</taxon>
        <taxon>Muridae</taxon>
        <taxon>Murinae</taxon>
        <taxon>Mus</taxon>
        <taxon>Mus</taxon>
    </lineage>
</organism>
<sequence length="1163" mass="124934">MFLMNAPPVVALQSRWEAFGQPRSFCLPDCFSEAKEDGSRASVSARVQMLISTLQRDEAALGMGHERLTQRGQRAERSRDTRLAPKPAVCKEQPEFPARGLVANCSALEKDEAGRRSPLELDSDSDDSVDRDIEEAIQEYLKARGGASEPMSQGAPSIPEPAHSSTLPIPCPSQLTPGSGSVPVGASEDQGSTSPASMSSEDSFEQSIRAEIEQFLNEKRQHENPKCDGFVDKKSDPNNSPARLRGNRETSARAALMGTCKEFIFRKPPRLTKMSTQQRNFQPKPTTEPETPVSTKLTAHRPEAAQSRGGVRRSMPARRSKRIRSSAPVHQASDSSSDDGIEEAIQLYQLEKTRKEASGDPPLRGQLKEESPGSAQPNALPEAHRRPPSKKKLAVPKVIDTTQGVLHPDPLSRLLTDSRASLPPGHAAAKSEAVCQASRLADTSTELMCAEAILDISKTILPAPMEGSDRPPSRNPLFCPQPMPPRSEGDSSNIDSDDSIEQEIRTFLALKAQVGSPQPAQGPLSSPGPSGQPGIPKVPFAKTLDLPLVCKRKRRGGGGSTTMPKKIREGRESTQDADHIQGKAQPGHDGWDPLGHNKITETPGGEAEAKEQPVISRTVGLSDTHLPQGALGKATEKESSEDKSSSLDSDEDLDMAIKDLLRSKRKFKKRCRDPRASCKKVRFGSTETRCGEKPSNLPGDWKDHRQQALRSCLPKCRGDNKDGPGRSPGSSVAEKAKMGGTGGEDATPAFLLRRKSPEGALPSTDTGASGHPPSASSPTSEDSAVDSDDSIELEIRRFLAEKAKESIRNTEPQGGPAKPEMPCRKDPTLGLQPGVCTRSQKARGTPQLAEGRRGPERARTQATGLLSQSGKGTLRAEQTARLTTALGRSEPALPKNTCRNSSAKASPPSRKSAHVHKDHSPQGSQTATAESVFGQLPSCAKVGAEAGSAGGTFHLNYGSQNLLTPNPGSQADLVLPWSDFAHQSRLSSPWVLNSGQGTVWTGVFRGEKEKGATSQAGAPPSLSSGPRKGLPFLSTQLFHFGKNVSWGGKQTSLFSPNLGLPLQAPAFSAFRETQPGHNPVFGSPHLLMKDSGNWPSRKAQGTLRQQDRRNSASEDKVLDLRYRHRVDREPQDQETLGSDASEFSDTSMEDGGSATVSSKGLKL</sequence>
<gene>
    <name type="primary">Ppp1r26</name>
    <name type="synonym">Gm347</name>
    <name type="synonym">Kiaa0649</name>
</gene>
<keyword id="KW-0539">Nucleus</keyword>
<keyword id="KW-0597">Phosphoprotein</keyword>
<keyword id="KW-0650">Protein phosphatase inhibitor</keyword>
<keyword id="KW-1185">Reference proteome</keyword>
<feature type="chain" id="PRO_0000309219" description="Protein phosphatase 1 regulatory subunit 26">
    <location>
        <begin position="1"/>
        <end position="1163"/>
    </location>
</feature>
<feature type="region of interest" description="Disordered" evidence="3">
    <location>
        <begin position="65"/>
        <end position="91"/>
    </location>
</feature>
<feature type="region of interest" description="Disordered" evidence="3">
    <location>
        <begin position="144"/>
        <end position="253"/>
    </location>
</feature>
<feature type="region of interest" description="Disordered" evidence="3">
    <location>
        <begin position="266"/>
        <end position="393"/>
    </location>
</feature>
<feature type="region of interest" description="Disordered" evidence="3">
    <location>
        <begin position="463"/>
        <end position="496"/>
    </location>
</feature>
<feature type="region of interest" description="Disordered" evidence="3">
    <location>
        <begin position="514"/>
        <end position="653"/>
    </location>
</feature>
<feature type="region of interest" description="Disordered" evidence="3">
    <location>
        <begin position="672"/>
        <end position="929"/>
    </location>
</feature>
<feature type="region of interest" description="Disordered" evidence="3">
    <location>
        <begin position="1073"/>
        <end position="1163"/>
    </location>
</feature>
<feature type="compositionally biased region" description="Basic and acidic residues" evidence="3">
    <location>
        <begin position="65"/>
        <end position="83"/>
    </location>
</feature>
<feature type="compositionally biased region" description="Polar residues" evidence="3">
    <location>
        <begin position="163"/>
        <end position="179"/>
    </location>
</feature>
<feature type="compositionally biased region" description="Polar residues" evidence="3">
    <location>
        <begin position="189"/>
        <end position="201"/>
    </location>
</feature>
<feature type="compositionally biased region" description="Basic and acidic residues" evidence="3">
    <location>
        <begin position="208"/>
        <end position="236"/>
    </location>
</feature>
<feature type="compositionally biased region" description="Polar residues" evidence="3">
    <location>
        <begin position="273"/>
        <end position="297"/>
    </location>
</feature>
<feature type="compositionally biased region" description="Basic residues" evidence="3">
    <location>
        <begin position="315"/>
        <end position="324"/>
    </location>
</feature>
<feature type="compositionally biased region" description="Low complexity" evidence="3">
    <location>
        <begin position="515"/>
        <end position="535"/>
    </location>
</feature>
<feature type="compositionally biased region" description="Basic and acidic residues" evidence="3">
    <location>
        <begin position="566"/>
        <end position="581"/>
    </location>
</feature>
<feature type="compositionally biased region" description="Basic and acidic residues" evidence="3">
    <location>
        <begin position="634"/>
        <end position="645"/>
    </location>
</feature>
<feature type="compositionally biased region" description="Basic residues" evidence="3">
    <location>
        <begin position="672"/>
        <end position="682"/>
    </location>
</feature>
<feature type="compositionally biased region" description="Low complexity" evidence="3">
    <location>
        <begin position="766"/>
        <end position="780"/>
    </location>
</feature>
<feature type="compositionally biased region" description="Acidic residues" evidence="3">
    <location>
        <begin position="783"/>
        <end position="792"/>
    </location>
</feature>
<feature type="compositionally biased region" description="Basic and acidic residues" evidence="3">
    <location>
        <begin position="793"/>
        <end position="808"/>
    </location>
</feature>
<feature type="compositionally biased region" description="Basic and acidic residues" evidence="3">
    <location>
        <begin position="850"/>
        <end position="859"/>
    </location>
</feature>
<feature type="compositionally biased region" description="Polar residues" evidence="3">
    <location>
        <begin position="860"/>
        <end position="871"/>
    </location>
</feature>
<feature type="compositionally biased region" description="Low complexity" evidence="3">
    <location>
        <begin position="901"/>
        <end position="910"/>
    </location>
</feature>
<feature type="compositionally biased region" description="Basic and acidic residues" evidence="3">
    <location>
        <begin position="1105"/>
        <end position="1131"/>
    </location>
</feature>
<feature type="compositionally biased region" description="Polar residues" evidence="3">
    <location>
        <begin position="1133"/>
        <end position="1146"/>
    </location>
</feature>
<feature type="compositionally biased region" description="Polar residues" evidence="3">
    <location>
        <begin position="1154"/>
        <end position="1163"/>
    </location>
</feature>
<feature type="modified residue" description="Phosphoserine" evidence="2">
    <location>
        <position position="1111"/>
    </location>
</feature>
<accession>Q6A025</accession>
<accession>Q6NS64</accession>